<keyword id="KW-0071">Autoinducer synthesis</keyword>
<keyword id="KW-0408">Iron</keyword>
<keyword id="KW-0456">Lyase</keyword>
<keyword id="KW-0479">Metal-binding</keyword>
<keyword id="KW-0673">Quorum sensing</keyword>
<gene>
    <name evidence="1" type="primary">luxS</name>
    <name type="ordered locus">BAMEG_5081</name>
</gene>
<organism>
    <name type="scientific">Bacillus anthracis (strain CDC 684 / NRRL 3495)</name>
    <dbReference type="NCBI Taxonomy" id="568206"/>
    <lineage>
        <taxon>Bacteria</taxon>
        <taxon>Bacillati</taxon>
        <taxon>Bacillota</taxon>
        <taxon>Bacilli</taxon>
        <taxon>Bacillales</taxon>
        <taxon>Bacillaceae</taxon>
        <taxon>Bacillus</taxon>
        <taxon>Bacillus cereus group</taxon>
    </lineage>
</organism>
<feature type="chain" id="PRO_1000118532" description="S-ribosylhomocysteine lyase">
    <location>
        <begin position="1"/>
        <end position="157"/>
    </location>
</feature>
<feature type="binding site" evidence="1">
    <location>
        <position position="54"/>
    </location>
    <ligand>
        <name>Fe cation</name>
        <dbReference type="ChEBI" id="CHEBI:24875"/>
    </ligand>
</feature>
<feature type="binding site" evidence="1">
    <location>
        <position position="58"/>
    </location>
    <ligand>
        <name>Fe cation</name>
        <dbReference type="ChEBI" id="CHEBI:24875"/>
    </ligand>
</feature>
<feature type="binding site" evidence="1">
    <location>
        <position position="126"/>
    </location>
    <ligand>
        <name>Fe cation</name>
        <dbReference type="ChEBI" id="CHEBI:24875"/>
    </ligand>
</feature>
<protein>
    <recommendedName>
        <fullName evidence="1">S-ribosylhomocysteine lyase</fullName>
        <ecNumber evidence="1">4.4.1.21</ecNumber>
    </recommendedName>
    <alternativeName>
        <fullName evidence="1">AI-2 synthesis protein</fullName>
    </alternativeName>
    <alternativeName>
        <fullName evidence="1">Autoinducer-2 production protein LuxS</fullName>
    </alternativeName>
</protein>
<name>LUXS_BACAC</name>
<dbReference type="EC" id="4.4.1.21" evidence="1"/>
<dbReference type="EMBL" id="CP001215">
    <property type="protein sequence ID" value="ACP13620.1"/>
    <property type="molecule type" value="Genomic_DNA"/>
</dbReference>
<dbReference type="RefSeq" id="WP_001141369.1">
    <property type="nucleotide sequence ID" value="NC_012581.1"/>
</dbReference>
<dbReference type="SMR" id="C3LB27"/>
<dbReference type="GeneID" id="93006297"/>
<dbReference type="KEGG" id="bah:BAMEG_5081"/>
<dbReference type="HOGENOM" id="CLU_107531_2_0_9"/>
<dbReference type="GO" id="GO:0005506">
    <property type="term" value="F:iron ion binding"/>
    <property type="evidence" value="ECO:0007669"/>
    <property type="project" value="InterPro"/>
</dbReference>
<dbReference type="GO" id="GO:0043768">
    <property type="term" value="F:S-ribosylhomocysteine lyase activity"/>
    <property type="evidence" value="ECO:0007669"/>
    <property type="project" value="UniProtKB-UniRule"/>
</dbReference>
<dbReference type="GO" id="GO:0009372">
    <property type="term" value="P:quorum sensing"/>
    <property type="evidence" value="ECO:0007669"/>
    <property type="project" value="UniProtKB-UniRule"/>
</dbReference>
<dbReference type="Gene3D" id="3.30.1360.80">
    <property type="entry name" value="S-ribosylhomocysteinase (LuxS)"/>
    <property type="match status" value="1"/>
</dbReference>
<dbReference type="HAMAP" id="MF_00091">
    <property type="entry name" value="LuxS"/>
    <property type="match status" value="1"/>
</dbReference>
<dbReference type="InterPro" id="IPR037005">
    <property type="entry name" value="LuxS_sf"/>
</dbReference>
<dbReference type="InterPro" id="IPR011249">
    <property type="entry name" value="Metalloenz_LuxS/M16"/>
</dbReference>
<dbReference type="InterPro" id="IPR003815">
    <property type="entry name" value="S-ribosylhomocysteinase"/>
</dbReference>
<dbReference type="NCBIfam" id="NF002603">
    <property type="entry name" value="PRK02260.1-3"/>
    <property type="match status" value="1"/>
</dbReference>
<dbReference type="PANTHER" id="PTHR35799">
    <property type="entry name" value="S-RIBOSYLHOMOCYSTEINE LYASE"/>
    <property type="match status" value="1"/>
</dbReference>
<dbReference type="PANTHER" id="PTHR35799:SF1">
    <property type="entry name" value="S-RIBOSYLHOMOCYSTEINE LYASE"/>
    <property type="match status" value="1"/>
</dbReference>
<dbReference type="Pfam" id="PF02664">
    <property type="entry name" value="LuxS"/>
    <property type="match status" value="1"/>
</dbReference>
<dbReference type="PIRSF" id="PIRSF006160">
    <property type="entry name" value="AI2"/>
    <property type="match status" value="1"/>
</dbReference>
<dbReference type="PRINTS" id="PR01487">
    <property type="entry name" value="LUXSPROTEIN"/>
</dbReference>
<dbReference type="SUPFAM" id="SSF63411">
    <property type="entry name" value="LuxS/MPP-like metallohydrolase"/>
    <property type="match status" value="1"/>
</dbReference>
<reference key="1">
    <citation type="submission" date="2008-10" db="EMBL/GenBank/DDBJ databases">
        <title>Genome sequence of Bacillus anthracis str. CDC 684.</title>
        <authorList>
            <person name="Dodson R.J."/>
            <person name="Munk A.C."/>
            <person name="Brettin T."/>
            <person name="Bruce D."/>
            <person name="Detter C."/>
            <person name="Tapia R."/>
            <person name="Han C."/>
            <person name="Sutton G."/>
            <person name="Sims D."/>
        </authorList>
    </citation>
    <scope>NUCLEOTIDE SEQUENCE [LARGE SCALE GENOMIC DNA]</scope>
    <source>
        <strain>CDC 684 / NRRL 3495</strain>
    </source>
</reference>
<proteinExistence type="inferred from homology"/>
<accession>C3LB27</accession>
<evidence type="ECO:0000255" key="1">
    <source>
        <dbReference type="HAMAP-Rule" id="MF_00091"/>
    </source>
</evidence>
<sequence length="157" mass="17856">MPSVESFELDHTIVKAPYVRHCGVHNVGSDGIVNKFDIRFCQPNKQAMKPDVIHTLEHLLAFNLRKYIDRYPHFDIIDISPMGCQTGYYLVVSGTPTVREIIDLLELTLKDAVQITEIPAANETQCGQAKLHDLEGAKRLMNFWLSQDKDELEKVFG</sequence>
<comment type="function">
    <text evidence="1">Involved in the synthesis of autoinducer 2 (AI-2) which is secreted by bacteria and is used to communicate both the cell density and the metabolic potential of the environment. The regulation of gene expression in response to changes in cell density is called quorum sensing. Catalyzes the transformation of S-ribosylhomocysteine (RHC) to homocysteine (HC) and 4,5-dihydroxy-2,3-pentadione (DPD).</text>
</comment>
<comment type="catalytic activity">
    <reaction evidence="1">
        <text>S-(5-deoxy-D-ribos-5-yl)-L-homocysteine = (S)-4,5-dihydroxypentane-2,3-dione + L-homocysteine</text>
        <dbReference type="Rhea" id="RHEA:17753"/>
        <dbReference type="ChEBI" id="CHEBI:29484"/>
        <dbReference type="ChEBI" id="CHEBI:58195"/>
        <dbReference type="ChEBI" id="CHEBI:58199"/>
        <dbReference type="EC" id="4.4.1.21"/>
    </reaction>
</comment>
<comment type="cofactor">
    <cofactor evidence="1">
        <name>Fe cation</name>
        <dbReference type="ChEBI" id="CHEBI:24875"/>
    </cofactor>
    <text evidence="1">Binds 1 Fe cation per subunit.</text>
</comment>
<comment type="subunit">
    <text evidence="1">Homodimer.</text>
</comment>
<comment type="similarity">
    <text evidence="1">Belongs to the LuxS family.</text>
</comment>